<keyword id="KW-1185">Reference proteome</keyword>
<accession>Q5FTB0</accession>
<name>CLPS_GLUOX</name>
<evidence type="ECO:0000255" key="1">
    <source>
        <dbReference type="HAMAP-Rule" id="MF_00302"/>
    </source>
</evidence>
<evidence type="ECO:0000256" key="2">
    <source>
        <dbReference type="SAM" id="MobiDB-lite"/>
    </source>
</evidence>
<protein>
    <recommendedName>
        <fullName evidence="1">ATP-dependent Clp protease adapter protein ClpS</fullName>
    </recommendedName>
</protein>
<dbReference type="EMBL" id="CP000009">
    <property type="protein sequence ID" value="AAW60386.1"/>
    <property type="molecule type" value="Genomic_DNA"/>
</dbReference>
<dbReference type="SMR" id="Q5FTB0"/>
<dbReference type="STRING" id="290633.GOX0608"/>
<dbReference type="KEGG" id="gox:GOX0608"/>
<dbReference type="eggNOG" id="COG2127">
    <property type="taxonomic scope" value="Bacteria"/>
</dbReference>
<dbReference type="HOGENOM" id="CLU_134358_0_0_5"/>
<dbReference type="Proteomes" id="UP000006375">
    <property type="component" value="Chromosome"/>
</dbReference>
<dbReference type="GO" id="GO:0030163">
    <property type="term" value="P:protein catabolic process"/>
    <property type="evidence" value="ECO:0007669"/>
    <property type="project" value="InterPro"/>
</dbReference>
<dbReference type="GO" id="GO:0006508">
    <property type="term" value="P:proteolysis"/>
    <property type="evidence" value="ECO:0007669"/>
    <property type="project" value="UniProtKB-UniRule"/>
</dbReference>
<dbReference type="FunFam" id="3.30.1390.10:FF:000002">
    <property type="entry name" value="ATP-dependent Clp protease adapter protein ClpS"/>
    <property type="match status" value="1"/>
</dbReference>
<dbReference type="Gene3D" id="3.30.1390.10">
    <property type="match status" value="1"/>
</dbReference>
<dbReference type="HAMAP" id="MF_00302">
    <property type="entry name" value="ClpS"/>
    <property type="match status" value="1"/>
</dbReference>
<dbReference type="InterPro" id="IPR022935">
    <property type="entry name" value="ClpS"/>
</dbReference>
<dbReference type="InterPro" id="IPR003769">
    <property type="entry name" value="ClpS_core"/>
</dbReference>
<dbReference type="InterPro" id="IPR014719">
    <property type="entry name" value="Ribosomal_bL12_C/ClpS-like"/>
</dbReference>
<dbReference type="NCBIfam" id="NF000669">
    <property type="entry name" value="PRK00033.1-2"/>
    <property type="match status" value="1"/>
</dbReference>
<dbReference type="NCBIfam" id="NF000672">
    <property type="entry name" value="PRK00033.1-5"/>
    <property type="match status" value="1"/>
</dbReference>
<dbReference type="PANTHER" id="PTHR33473:SF19">
    <property type="entry name" value="ATP-DEPENDENT CLP PROTEASE ADAPTER PROTEIN CLPS"/>
    <property type="match status" value="1"/>
</dbReference>
<dbReference type="PANTHER" id="PTHR33473">
    <property type="entry name" value="ATP-DEPENDENT CLP PROTEASE ADAPTER PROTEIN CLPS1, CHLOROPLASTIC"/>
    <property type="match status" value="1"/>
</dbReference>
<dbReference type="Pfam" id="PF02617">
    <property type="entry name" value="ClpS"/>
    <property type="match status" value="1"/>
</dbReference>
<dbReference type="SUPFAM" id="SSF54736">
    <property type="entry name" value="ClpS-like"/>
    <property type="match status" value="1"/>
</dbReference>
<comment type="function">
    <text evidence="1">Involved in the modulation of the specificity of the ClpAP-mediated ATP-dependent protein degradation.</text>
</comment>
<comment type="subunit">
    <text evidence="1">Binds to the N-terminal domain of the chaperone ClpA.</text>
</comment>
<comment type="similarity">
    <text evidence="1">Belongs to the ClpS family.</text>
</comment>
<sequence>MGPESPDSIPPHGPGNGDGDQDLDIGVVVRPRTRTRKPSMYKVLMLNDDYTPMEFVVHVLERFFAKTRDEATSIMLQVHQRGVGICGVFTYEVAESKVTQVMDLARQNQHPLQCTIEKD</sequence>
<feature type="chain" id="PRO_0000215712" description="ATP-dependent Clp protease adapter protein ClpS">
    <location>
        <begin position="1"/>
        <end position="119"/>
    </location>
</feature>
<feature type="region of interest" description="Disordered" evidence="2">
    <location>
        <begin position="1"/>
        <end position="24"/>
    </location>
</feature>
<proteinExistence type="inferred from homology"/>
<gene>
    <name evidence="1" type="primary">clpS</name>
    <name type="ordered locus">GOX0608</name>
</gene>
<organism>
    <name type="scientific">Gluconobacter oxydans (strain 621H)</name>
    <name type="common">Gluconobacter suboxydans</name>
    <dbReference type="NCBI Taxonomy" id="290633"/>
    <lineage>
        <taxon>Bacteria</taxon>
        <taxon>Pseudomonadati</taxon>
        <taxon>Pseudomonadota</taxon>
        <taxon>Alphaproteobacteria</taxon>
        <taxon>Acetobacterales</taxon>
        <taxon>Acetobacteraceae</taxon>
        <taxon>Gluconobacter</taxon>
    </lineage>
</organism>
<reference key="1">
    <citation type="journal article" date="2005" name="Nat. Biotechnol.">
        <title>Complete genome sequence of the acetic acid bacterium Gluconobacter oxydans.</title>
        <authorList>
            <person name="Prust C."/>
            <person name="Hoffmeister M."/>
            <person name="Liesegang H."/>
            <person name="Wiezer A."/>
            <person name="Fricke W.F."/>
            <person name="Ehrenreich A."/>
            <person name="Gottschalk G."/>
            <person name="Deppenmeier U."/>
        </authorList>
    </citation>
    <scope>NUCLEOTIDE SEQUENCE [LARGE SCALE GENOMIC DNA]</scope>
    <source>
        <strain>621H</strain>
    </source>
</reference>